<protein>
    <recommendedName>
        <fullName evidence="1">Phosphatidylserine decarboxylase proenzyme</fullName>
        <ecNumber evidence="1">4.1.1.65</ecNumber>
    </recommendedName>
    <component>
        <recommendedName>
            <fullName evidence="1">Phosphatidylserine decarboxylase alpha chain</fullName>
        </recommendedName>
    </component>
    <component>
        <recommendedName>
            <fullName evidence="1">Phosphatidylserine decarboxylase beta chain</fullName>
        </recommendedName>
    </component>
</protein>
<evidence type="ECO:0000255" key="1">
    <source>
        <dbReference type="HAMAP-Rule" id="MF_00662"/>
    </source>
</evidence>
<reference key="1">
    <citation type="journal article" date="2008" name="PLoS ONE">
        <title>Comparative analysis of Acinetobacters: three genomes for three lifestyles.</title>
        <authorList>
            <person name="Vallenet D."/>
            <person name="Nordmann P."/>
            <person name="Barbe V."/>
            <person name="Poirel L."/>
            <person name="Mangenot S."/>
            <person name="Bataille E."/>
            <person name="Dossat C."/>
            <person name="Gas S."/>
            <person name="Kreimeyer A."/>
            <person name="Lenoble P."/>
            <person name="Oztas S."/>
            <person name="Poulain J."/>
            <person name="Segurens B."/>
            <person name="Robert C."/>
            <person name="Abergel C."/>
            <person name="Claverie J.-M."/>
            <person name="Raoult D."/>
            <person name="Medigue C."/>
            <person name="Weissenbach J."/>
            <person name="Cruveiller S."/>
        </authorList>
    </citation>
    <scope>NUCLEOTIDE SEQUENCE [LARGE SCALE GENOMIC DNA]</scope>
    <source>
        <strain>SDF</strain>
    </source>
</reference>
<proteinExistence type="inferred from homology"/>
<feature type="chain" id="PRO_1000131322" description="Phosphatidylserine decarboxylase beta chain" evidence="1">
    <location>
        <begin position="1"/>
        <end position="249"/>
    </location>
</feature>
<feature type="chain" id="PRO_1000131323" description="Phosphatidylserine decarboxylase alpha chain" evidence="1">
    <location>
        <begin position="250"/>
        <end position="283"/>
    </location>
</feature>
<feature type="active site" description="Charge relay system; for autoendoproteolytic cleavage activity" evidence="1">
    <location>
        <position position="96"/>
    </location>
</feature>
<feature type="active site" description="Charge relay system; for autoendoproteolytic cleavage activity" evidence="1">
    <location>
        <position position="152"/>
    </location>
</feature>
<feature type="active site" description="Charge relay system; for autoendoproteolytic cleavage activity" evidence="1">
    <location>
        <position position="250"/>
    </location>
</feature>
<feature type="active site" description="Schiff-base intermediate with substrate; via pyruvic acid; for decarboxylase activity" evidence="1">
    <location>
        <position position="250"/>
    </location>
</feature>
<feature type="site" description="Cleavage (non-hydrolytic); by autocatalysis" evidence="1">
    <location>
        <begin position="249"/>
        <end position="250"/>
    </location>
</feature>
<feature type="modified residue" description="Pyruvic acid (Ser); by autocatalysis" evidence="1">
    <location>
        <position position="250"/>
    </location>
</feature>
<accession>B0VP52</accession>
<sequence length="283" mass="31283">MSFTSRLKKELFIKAQNLVPQHQLSRVVGKVAASENPILKAAVIHAFKTKYGIDLSIAEQGNALKYKSFNDFFTRALKDGVRLVDENPDSIVSPADGAISQIGKITAGKVFQAKGQSFSVEKLIGDPQLAQPFQEGEFATVYLSPRDYHRVHMPFSGILTETLYVPGELFSVNQVTAENVPGLFARNERMVCLFDTELGRMAVVLVGAMIVAGIETVATGKVKPSGRIELQHHELKLEKGAELGRFYLGSTAIILFEKDKIEWEKRFKAESVVVMGERMGHTL</sequence>
<comment type="function">
    <text evidence="1">Catalyzes the formation of phosphatidylethanolamine (PtdEtn) from phosphatidylserine (PtdSer).</text>
</comment>
<comment type="catalytic activity">
    <reaction evidence="1">
        <text>a 1,2-diacyl-sn-glycero-3-phospho-L-serine + H(+) = a 1,2-diacyl-sn-glycero-3-phosphoethanolamine + CO2</text>
        <dbReference type="Rhea" id="RHEA:20828"/>
        <dbReference type="ChEBI" id="CHEBI:15378"/>
        <dbReference type="ChEBI" id="CHEBI:16526"/>
        <dbReference type="ChEBI" id="CHEBI:57262"/>
        <dbReference type="ChEBI" id="CHEBI:64612"/>
        <dbReference type="EC" id="4.1.1.65"/>
    </reaction>
</comment>
<comment type="cofactor">
    <cofactor evidence="1">
        <name>pyruvate</name>
        <dbReference type="ChEBI" id="CHEBI:15361"/>
    </cofactor>
    <text evidence="1">Binds 1 pyruvoyl group covalently per subunit.</text>
</comment>
<comment type="pathway">
    <text evidence="1">Phospholipid metabolism; phosphatidylethanolamine biosynthesis; phosphatidylethanolamine from CDP-diacylglycerol: step 2/2.</text>
</comment>
<comment type="subunit">
    <text evidence="1">Heterodimer of a large membrane-associated beta subunit and a small pyruvoyl-containing alpha subunit.</text>
</comment>
<comment type="subcellular location">
    <subcellularLocation>
        <location evidence="1">Cell membrane</location>
        <topology evidence="1">Peripheral membrane protein</topology>
    </subcellularLocation>
</comment>
<comment type="PTM">
    <text evidence="1">Is synthesized initially as an inactive proenzyme. Formation of the active enzyme involves a self-maturation process in which the active site pyruvoyl group is generated from an internal serine residue via an autocatalytic post-translational modification. Two non-identical subunits are generated from the proenzyme in this reaction, and the pyruvate is formed at the N-terminus of the alpha chain, which is derived from the carboxyl end of the proenzyme. The autoendoproteolytic cleavage occurs by a canonical serine protease mechanism, in which the side chain hydroxyl group of the serine supplies its oxygen atom to form the C-terminus of the beta chain, while the remainder of the serine residue undergoes an oxidative deamination to produce ammonia and the pyruvoyl prosthetic group on the alpha chain. During this reaction, the Ser that is part of the protease active site of the proenzyme becomes the pyruvoyl prosthetic group, which constitutes an essential element of the active site of the mature decarboxylase.</text>
</comment>
<comment type="similarity">
    <text evidence="1">Belongs to the phosphatidylserine decarboxylase family. PSD-B subfamily. Prokaryotic type I sub-subfamily.</text>
</comment>
<dbReference type="EC" id="4.1.1.65" evidence="1"/>
<dbReference type="EMBL" id="CU468230">
    <property type="protein sequence ID" value="CAP02788.1"/>
    <property type="molecule type" value="Genomic_DNA"/>
</dbReference>
<dbReference type="SMR" id="B0VP52"/>
<dbReference type="KEGG" id="abm:ABSDF3526"/>
<dbReference type="HOGENOM" id="CLU_029061_4_1_6"/>
<dbReference type="UniPathway" id="UPA00558">
    <property type="reaction ID" value="UER00616"/>
</dbReference>
<dbReference type="Proteomes" id="UP000001741">
    <property type="component" value="Chromosome"/>
</dbReference>
<dbReference type="GO" id="GO:0005886">
    <property type="term" value="C:plasma membrane"/>
    <property type="evidence" value="ECO:0007669"/>
    <property type="project" value="UniProtKB-SubCell"/>
</dbReference>
<dbReference type="GO" id="GO:0004609">
    <property type="term" value="F:phosphatidylserine decarboxylase activity"/>
    <property type="evidence" value="ECO:0007669"/>
    <property type="project" value="UniProtKB-UniRule"/>
</dbReference>
<dbReference type="GO" id="GO:0006646">
    <property type="term" value="P:phosphatidylethanolamine biosynthetic process"/>
    <property type="evidence" value="ECO:0007669"/>
    <property type="project" value="UniProtKB-UniRule"/>
</dbReference>
<dbReference type="HAMAP" id="MF_00662">
    <property type="entry name" value="PS_decarb_PSD_B_type1"/>
    <property type="match status" value="1"/>
</dbReference>
<dbReference type="InterPro" id="IPR003817">
    <property type="entry name" value="PS_Dcarbxylase"/>
</dbReference>
<dbReference type="InterPro" id="IPR033177">
    <property type="entry name" value="PSD-B"/>
</dbReference>
<dbReference type="InterPro" id="IPR033178">
    <property type="entry name" value="PSD_type1_pro"/>
</dbReference>
<dbReference type="NCBIfam" id="TIGR00163">
    <property type="entry name" value="PS_decarb"/>
    <property type="match status" value="1"/>
</dbReference>
<dbReference type="PANTHER" id="PTHR10067">
    <property type="entry name" value="PHOSPHATIDYLSERINE DECARBOXYLASE"/>
    <property type="match status" value="1"/>
</dbReference>
<dbReference type="PANTHER" id="PTHR10067:SF6">
    <property type="entry name" value="PHOSPHATIDYLSERINE DECARBOXYLASE PROENZYME, MITOCHONDRIAL"/>
    <property type="match status" value="1"/>
</dbReference>
<dbReference type="Pfam" id="PF02666">
    <property type="entry name" value="PS_Dcarbxylase"/>
    <property type="match status" value="1"/>
</dbReference>
<gene>
    <name evidence="1" type="primary">psd</name>
    <name type="ordered locus">ABSDF3526</name>
</gene>
<keyword id="KW-1003">Cell membrane</keyword>
<keyword id="KW-0210">Decarboxylase</keyword>
<keyword id="KW-0444">Lipid biosynthesis</keyword>
<keyword id="KW-0443">Lipid metabolism</keyword>
<keyword id="KW-0456">Lyase</keyword>
<keyword id="KW-0472">Membrane</keyword>
<keyword id="KW-0594">Phospholipid biosynthesis</keyword>
<keyword id="KW-1208">Phospholipid metabolism</keyword>
<keyword id="KW-0670">Pyruvate</keyword>
<keyword id="KW-0865">Zymogen</keyword>
<name>PSD_ACIBS</name>
<organism>
    <name type="scientific">Acinetobacter baumannii (strain SDF)</name>
    <dbReference type="NCBI Taxonomy" id="509170"/>
    <lineage>
        <taxon>Bacteria</taxon>
        <taxon>Pseudomonadati</taxon>
        <taxon>Pseudomonadota</taxon>
        <taxon>Gammaproteobacteria</taxon>
        <taxon>Moraxellales</taxon>
        <taxon>Moraxellaceae</taxon>
        <taxon>Acinetobacter</taxon>
        <taxon>Acinetobacter calcoaceticus/baumannii complex</taxon>
    </lineage>
</organism>